<comment type="function">
    <text evidence="1">Component of the class I major histocompatibility complex (MHC). Involved in the presentation of peptide antigens to the immune system (By similarity).</text>
</comment>
<comment type="subunit">
    <text evidence="1">Heterodimer of an alpha chain and a beta chain. Beta-2-microglobulin is the beta-chain of major histocompatibility complex class I molecules (By similarity).</text>
</comment>
<comment type="subcellular location">
    <subcellularLocation>
        <location evidence="1">Secreted</location>
    </subcellularLocation>
</comment>
<comment type="similarity">
    <text evidence="3">Belongs to the beta-2-microglobulin family.</text>
</comment>
<protein>
    <recommendedName>
        <fullName>Beta-2-microglobulin</fullName>
    </recommendedName>
</protein>
<sequence length="119" mass="13596">MVCSVVVALLALLSLSGLEALQHAPKIQVYSRHPAENGKPNFLNCYVSGFHPSDIEVDLLKNGKKIEKVEHSDLSFSKDWSFYLLYYTEFTPNEKDEYACRVSHVTFSTPKTVKWDRNI</sequence>
<accession>O77535</accession>
<reference key="1">
    <citation type="journal article" date="1998" name="Immunogenetics">
        <title>Beta-2-microglobulin in neotropical primates (Platyrrhini).</title>
        <authorList>
            <person name="Canavez F.C."/>
            <person name="Ladasky J.J."/>
            <person name="Muniz J.A.P.C."/>
            <person name="Seuanez H.N."/>
            <person name="Parham P."/>
        </authorList>
    </citation>
    <scope>NUCLEOTIDE SEQUENCE [GENOMIC DNA]</scope>
    <source>
        <tissue>Blood</tissue>
    </source>
</reference>
<name>B2MG_CEBPY</name>
<evidence type="ECO:0000250" key="1"/>
<evidence type="ECO:0000255" key="2">
    <source>
        <dbReference type="PROSITE-ProRule" id="PRU00114"/>
    </source>
</evidence>
<evidence type="ECO:0000305" key="3"/>
<dbReference type="EMBL" id="AF032084">
    <property type="protein sequence ID" value="AAC52100.1"/>
    <property type="molecule type" value="Genomic_DNA"/>
</dbReference>
<dbReference type="EMBL" id="AF032083">
    <property type="protein sequence ID" value="AAC52100.1"/>
    <property type="status" value="JOINED"/>
    <property type="molecule type" value="Genomic_DNA"/>
</dbReference>
<dbReference type="SMR" id="O77535"/>
<dbReference type="GO" id="GO:0005576">
    <property type="term" value="C:extracellular region"/>
    <property type="evidence" value="ECO:0007669"/>
    <property type="project" value="UniProtKB-SubCell"/>
</dbReference>
<dbReference type="GO" id="GO:0042612">
    <property type="term" value="C:MHC class I protein complex"/>
    <property type="evidence" value="ECO:0007669"/>
    <property type="project" value="UniProtKB-KW"/>
</dbReference>
<dbReference type="GO" id="GO:0002474">
    <property type="term" value="P:antigen processing and presentation of peptide antigen via MHC class I"/>
    <property type="evidence" value="ECO:0007669"/>
    <property type="project" value="UniProtKB-KW"/>
</dbReference>
<dbReference type="GO" id="GO:0006955">
    <property type="term" value="P:immune response"/>
    <property type="evidence" value="ECO:0007669"/>
    <property type="project" value="InterPro"/>
</dbReference>
<dbReference type="CDD" id="cd05770">
    <property type="entry name" value="IgC1_beta2m"/>
    <property type="match status" value="1"/>
</dbReference>
<dbReference type="FunFam" id="2.60.40.10:FF:001005">
    <property type="entry name" value="Beta-2-microglobulin"/>
    <property type="match status" value="1"/>
</dbReference>
<dbReference type="Gene3D" id="2.60.40.10">
    <property type="entry name" value="Immunoglobulins"/>
    <property type="match status" value="1"/>
</dbReference>
<dbReference type="InterPro" id="IPR015707">
    <property type="entry name" value="B2Microglobulin"/>
</dbReference>
<dbReference type="InterPro" id="IPR007110">
    <property type="entry name" value="Ig-like_dom"/>
</dbReference>
<dbReference type="InterPro" id="IPR036179">
    <property type="entry name" value="Ig-like_dom_sf"/>
</dbReference>
<dbReference type="InterPro" id="IPR013783">
    <property type="entry name" value="Ig-like_fold"/>
</dbReference>
<dbReference type="InterPro" id="IPR003006">
    <property type="entry name" value="Ig/MHC_CS"/>
</dbReference>
<dbReference type="InterPro" id="IPR003597">
    <property type="entry name" value="Ig_C1-set"/>
</dbReference>
<dbReference type="InterPro" id="IPR050160">
    <property type="entry name" value="MHC/Immunoglobulin"/>
</dbReference>
<dbReference type="PANTHER" id="PTHR19944:SF62">
    <property type="entry name" value="BETA-2-MICROGLOBULIN"/>
    <property type="match status" value="1"/>
</dbReference>
<dbReference type="PANTHER" id="PTHR19944">
    <property type="entry name" value="MHC CLASS II-RELATED"/>
    <property type="match status" value="1"/>
</dbReference>
<dbReference type="Pfam" id="PF07654">
    <property type="entry name" value="C1-set"/>
    <property type="match status" value="1"/>
</dbReference>
<dbReference type="SMART" id="SM00407">
    <property type="entry name" value="IGc1"/>
    <property type="match status" value="1"/>
</dbReference>
<dbReference type="SUPFAM" id="SSF48726">
    <property type="entry name" value="Immunoglobulin"/>
    <property type="match status" value="1"/>
</dbReference>
<dbReference type="PROSITE" id="PS50835">
    <property type="entry name" value="IG_LIKE"/>
    <property type="match status" value="1"/>
</dbReference>
<dbReference type="PROSITE" id="PS00290">
    <property type="entry name" value="IG_MHC"/>
    <property type="match status" value="1"/>
</dbReference>
<feature type="signal peptide" evidence="1">
    <location>
        <begin position="1"/>
        <end position="20"/>
    </location>
</feature>
<feature type="chain" id="PRO_0000018774" description="Beta-2-microglobulin">
    <location>
        <begin position="21"/>
        <end position="119"/>
    </location>
</feature>
<feature type="domain" description="Ig-like C1-type">
    <location>
        <begin position="25"/>
        <end position="114"/>
    </location>
</feature>
<feature type="disulfide bond" evidence="2">
    <location>
        <begin position="45"/>
        <end position="100"/>
    </location>
</feature>
<keyword id="KW-1015">Disulfide bond</keyword>
<keyword id="KW-0391">Immunity</keyword>
<keyword id="KW-0393">Immunoglobulin domain</keyword>
<keyword id="KW-0490">MHC I</keyword>
<keyword id="KW-0964">Secreted</keyword>
<keyword id="KW-0732">Signal</keyword>
<gene>
    <name type="primary">B2M</name>
</gene>
<organism>
    <name type="scientific">Cebuella pygmaea</name>
    <name type="common">Pygmy marmoset</name>
    <name type="synonym">Callithrix pygmaea</name>
    <dbReference type="NCBI Taxonomy" id="9493"/>
    <lineage>
        <taxon>Eukaryota</taxon>
        <taxon>Metazoa</taxon>
        <taxon>Chordata</taxon>
        <taxon>Craniata</taxon>
        <taxon>Vertebrata</taxon>
        <taxon>Euteleostomi</taxon>
        <taxon>Mammalia</taxon>
        <taxon>Eutheria</taxon>
        <taxon>Euarchontoglires</taxon>
        <taxon>Primates</taxon>
        <taxon>Haplorrhini</taxon>
        <taxon>Platyrrhini</taxon>
        <taxon>Cebidae</taxon>
        <taxon>Callitrichinae</taxon>
        <taxon>Cebuella</taxon>
    </lineage>
</organism>
<proteinExistence type="inferred from homology"/>